<keyword id="KW-0028">Amino-acid biosynthesis</keyword>
<keyword id="KW-0100">Branched-chain amino acid biosynthesis</keyword>
<keyword id="KW-0963">Cytoplasm</keyword>
<keyword id="KW-0432">Leucine biosynthesis</keyword>
<keyword id="KW-0460">Magnesium</keyword>
<keyword id="KW-0479">Metal-binding</keyword>
<keyword id="KW-1185">Reference proteome</keyword>
<keyword id="KW-0677">Repeat</keyword>
<keyword id="KW-0808">Transferase</keyword>
<comment type="function">
    <text evidence="1">Catalyzes the condensation of the acetyl group of acetyl-CoA with 3-methyl-2-oxobutanoate (2-ketoisovalerate) to form 3-carboxy-3-hydroxy-4-methylpentanoate (2-isopropylmalate).</text>
</comment>
<comment type="catalytic activity">
    <reaction evidence="1">
        <text>3-methyl-2-oxobutanoate + acetyl-CoA + H2O = (2S)-2-isopropylmalate + CoA + H(+)</text>
        <dbReference type="Rhea" id="RHEA:21524"/>
        <dbReference type="ChEBI" id="CHEBI:1178"/>
        <dbReference type="ChEBI" id="CHEBI:11851"/>
        <dbReference type="ChEBI" id="CHEBI:15377"/>
        <dbReference type="ChEBI" id="CHEBI:15378"/>
        <dbReference type="ChEBI" id="CHEBI:57287"/>
        <dbReference type="ChEBI" id="CHEBI:57288"/>
        <dbReference type="EC" id="2.3.3.13"/>
    </reaction>
</comment>
<comment type="cofactor">
    <cofactor evidence="1">
        <name>Mg(2+)</name>
        <dbReference type="ChEBI" id="CHEBI:18420"/>
    </cofactor>
</comment>
<comment type="pathway">
    <text evidence="1">Amino-acid biosynthesis; L-leucine biosynthesis; L-leucine from 3-methyl-2-oxobutanoate: step 1/4.</text>
</comment>
<comment type="subunit">
    <text evidence="1">Homodimer.</text>
</comment>
<comment type="subcellular location">
    <subcellularLocation>
        <location evidence="1">Cytoplasm</location>
    </subcellularLocation>
</comment>
<comment type="miscellaneous">
    <text evidence="3">In Mycobacteria this gene has a variable number tandem repeat (VNTR); in ATCC BAA-935 / AF2122/97 there are 5 repeats, other strains can have up to 6 repeats.</text>
</comment>
<comment type="similarity">
    <text evidence="1">Belongs to the alpha-IPM synthase/homocitrate synthase family. LeuA type 2 subfamily.</text>
</comment>
<feature type="chain" id="PRO_0000140434" description="2-isopropylmalate synthase">
    <location>
        <begin position="1"/>
        <end position="701"/>
    </location>
</feature>
<feature type="domain" description="Pyruvate carboxyltransferase" evidence="1">
    <location>
        <begin position="72"/>
        <end position="346"/>
    </location>
</feature>
<feature type="repeat" description="VNTR1" evidence="3">
    <location>
        <begin position="575"/>
        <end position="593"/>
    </location>
</feature>
<feature type="repeat" description="VNTR2" evidence="3">
    <location>
        <begin position="594"/>
        <end position="612"/>
    </location>
</feature>
<feature type="repeat" description="VNTR3" evidence="3">
    <location>
        <begin position="613"/>
        <end position="631"/>
    </location>
</feature>
<feature type="repeat" description="VNTR4" evidence="3">
    <location>
        <begin position="632"/>
        <end position="650"/>
    </location>
</feature>
<feature type="repeat" description="VNTR5" evidence="3">
    <location>
        <begin position="651"/>
        <end position="669"/>
    </location>
</feature>
<feature type="region of interest" description="Disordered" evidence="2">
    <location>
        <begin position="1"/>
        <end position="40"/>
    </location>
</feature>
<feature type="region of interest" description="Regulatory domain" evidence="1">
    <location>
        <begin position="491"/>
        <end position="701"/>
    </location>
</feature>
<feature type="region of interest" description="Disordered" evidence="2">
    <location>
        <begin position="581"/>
        <end position="670"/>
    </location>
</feature>
<feature type="compositionally biased region" description="Polar residues" evidence="2">
    <location>
        <begin position="31"/>
        <end position="40"/>
    </location>
</feature>
<feature type="binding site" evidence="1">
    <location>
        <position position="81"/>
    </location>
    <ligand>
        <name>Mg(2+)</name>
        <dbReference type="ChEBI" id="CHEBI:18420"/>
    </ligand>
</feature>
<feature type="binding site" evidence="1">
    <location>
        <position position="285"/>
    </location>
    <ligand>
        <name>Mg(2+)</name>
        <dbReference type="ChEBI" id="CHEBI:18420"/>
    </ligand>
</feature>
<feature type="binding site" evidence="1">
    <location>
        <position position="287"/>
    </location>
    <ligand>
        <name>Mg(2+)</name>
        <dbReference type="ChEBI" id="CHEBI:18420"/>
    </ligand>
</feature>
<feature type="binding site" evidence="1">
    <location>
        <position position="321"/>
    </location>
    <ligand>
        <name>Mg(2+)</name>
        <dbReference type="ChEBI" id="CHEBI:18420"/>
    </ligand>
</feature>
<evidence type="ECO:0000255" key="1">
    <source>
        <dbReference type="HAMAP-Rule" id="MF_00572"/>
    </source>
</evidence>
<evidence type="ECO:0000256" key="2">
    <source>
        <dbReference type="SAM" id="MobiDB-lite"/>
    </source>
</evidence>
<evidence type="ECO:0000305" key="3"/>
<organism>
    <name type="scientific">Mycobacterium bovis (strain ATCC BAA-935 / AF2122/97)</name>
    <dbReference type="NCBI Taxonomy" id="233413"/>
    <lineage>
        <taxon>Bacteria</taxon>
        <taxon>Bacillati</taxon>
        <taxon>Actinomycetota</taxon>
        <taxon>Actinomycetes</taxon>
        <taxon>Mycobacteriales</taxon>
        <taxon>Mycobacteriaceae</taxon>
        <taxon>Mycobacterium</taxon>
        <taxon>Mycobacterium tuberculosis complex</taxon>
    </lineage>
</organism>
<proteinExistence type="inferred from homology"/>
<reference key="1">
    <citation type="journal article" date="2003" name="Proc. Natl. Acad. Sci. U.S.A.">
        <title>The complete genome sequence of Mycobacterium bovis.</title>
        <authorList>
            <person name="Garnier T."/>
            <person name="Eiglmeier K."/>
            <person name="Camus J.-C."/>
            <person name="Medina N."/>
            <person name="Mansoor H."/>
            <person name="Pryor M."/>
            <person name="Duthoy S."/>
            <person name="Grondin S."/>
            <person name="Lacroix C."/>
            <person name="Monsempe C."/>
            <person name="Simon S."/>
            <person name="Harris B."/>
            <person name="Atkin R."/>
            <person name="Doggett J."/>
            <person name="Mayes R."/>
            <person name="Keating L."/>
            <person name="Wheeler P.R."/>
            <person name="Parkhill J."/>
            <person name="Barrell B.G."/>
            <person name="Cole S.T."/>
            <person name="Gordon S.V."/>
            <person name="Hewinson R.G."/>
        </authorList>
    </citation>
    <scope>NUCLEOTIDE SEQUENCE [LARGE SCALE GENOMIC DNA]</scope>
    <source>
        <strain>ATCC BAA-935 / AF2122/97</strain>
    </source>
</reference>
<reference key="2">
    <citation type="journal article" date="2017" name="Genome Announc.">
        <title>Updated reference genome sequence and annotation of Mycobacterium bovis AF2122/97.</title>
        <authorList>
            <person name="Malone K.M."/>
            <person name="Farrell D."/>
            <person name="Stuber T.P."/>
            <person name="Schubert O.T."/>
            <person name="Aebersold R."/>
            <person name="Robbe-Austerman S."/>
            <person name="Gordon S.V."/>
        </authorList>
    </citation>
    <scope>NUCLEOTIDE SEQUENCE [LARGE SCALE GENOMIC DNA]</scope>
    <scope>GENOME REANNOTATION</scope>
    <source>
        <strain>ATCC BAA-935 / AF2122/97</strain>
    </source>
</reference>
<name>LEU1_MYCBO</name>
<sequence length="701" mass="75683">MTTSESPDAYTESFGAHTIVKPAGPPRVGQPSWNPQRASSMPVNRYRPFAEEVEPIRLRNRTWPDRVIDRAPLWCAVDLRDGNQALIDPMSPARKRRMFDLLVRMGYKEIEVGFPSASQTDFDFVREIIEQGAIPDDVTIQVLTQCRPELIERTFQACSGAHRAIVHFYNSTSILQRRVVFRANRAEVQAIATDGARKCVEQAAKYPGTQWRFEYSPESYTGTELEYAKQVCDAVGEVIAPTPERPIIFNLPATVEMTTPNVYADSIEWMSRNLANRESVILSLHPHNDRGTAVAAAELGFAAGADRIEGCLFGNGERTGNVCLVTLGLNLFSRGVDPQIDFSNIDEIRRTVEYCNQLPVHERHPYGGDLVYTAFSGSHQDAINKGLDAMKLDADAADCDVDDMLWQVPYLPIDPRDVGRTYEAVIRVNSQSGKGGVAYIMKTDHGLSLPRRLQIEFSQVIQKIAEGTAGEGGEVSPKEMWDAFAEEYLAPVRPLERIRQHVDAADDDGGTTSITATVKINGVETEISGSGNGPLAAFVHALADVGFDVAVLDYYEHAMSAGDDAQAAAYVEASVTIASPAQPGEAGRHASDPVTIASPAQPGEAGRHASDPVTIASPAQPGEAGRHASDPVTIASPAQPGEAGRHASDPVTIASPAQPGEAGRHASDPVTSKTVWGVGIAPSITTASLRAVVSAVNRAAR</sequence>
<dbReference type="EC" id="2.3.3.13" evidence="1"/>
<dbReference type="EMBL" id="LT708304">
    <property type="protein sequence ID" value="SIU02366.1"/>
    <property type="molecule type" value="Genomic_DNA"/>
</dbReference>
<dbReference type="RefSeq" id="WP_023349635.1">
    <property type="nucleotide sequence ID" value="NC_002945.4"/>
</dbReference>
<dbReference type="SMR" id="Q7TVV6"/>
<dbReference type="KEGG" id="mbo:BQ2027_MB3737"/>
<dbReference type="UniPathway" id="UPA00048">
    <property type="reaction ID" value="UER00070"/>
</dbReference>
<dbReference type="Proteomes" id="UP000001419">
    <property type="component" value="Chromosome"/>
</dbReference>
<dbReference type="GO" id="GO:0005737">
    <property type="term" value="C:cytoplasm"/>
    <property type="evidence" value="ECO:0007669"/>
    <property type="project" value="UniProtKB-SubCell"/>
</dbReference>
<dbReference type="GO" id="GO:0003852">
    <property type="term" value="F:2-isopropylmalate synthase activity"/>
    <property type="evidence" value="ECO:0007669"/>
    <property type="project" value="UniProtKB-UniRule"/>
</dbReference>
<dbReference type="GO" id="GO:0003985">
    <property type="term" value="F:acetyl-CoA C-acetyltransferase activity"/>
    <property type="evidence" value="ECO:0007669"/>
    <property type="project" value="UniProtKB-UniRule"/>
</dbReference>
<dbReference type="GO" id="GO:0000287">
    <property type="term" value="F:magnesium ion binding"/>
    <property type="evidence" value="ECO:0007669"/>
    <property type="project" value="UniProtKB-UniRule"/>
</dbReference>
<dbReference type="GO" id="GO:0009098">
    <property type="term" value="P:L-leucine biosynthetic process"/>
    <property type="evidence" value="ECO:0007669"/>
    <property type="project" value="UniProtKB-UniRule"/>
</dbReference>
<dbReference type="CDD" id="cd07942">
    <property type="entry name" value="DRE_TIM_LeuA"/>
    <property type="match status" value="1"/>
</dbReference>
<dbReference type="FunFam" id="3.20.20.70:FF:000045">
    <property type="entry name" value="2-isopropylmalate synthase"/>
    <property type="match status" value="1"/>
</dbReference>
<dbReference type="Gene3D" id="3.30.160.270">
    <property type="match status" value="2"/>
</dbReference>
<dbReference type="Gene3D" id="3.20.20.70">
    <property type="entry name" value="Aldolase class I"/>
    <property type="match status" value="1"/>
</dbReference>
<dbReference type="HAMAP" id="MF_00572">
    <property type="entry name" value="LeuA_type2"/>
    <property type="match status" value="1"/>
</dbReference>
<dbReference type="InterPro" id="IPR013709">
    <property type="entry name" value="2-isopropylmalate_synth_dimer"/>
</dbReference>
<dbReference type="InterPro" id="IPR002034">
    <property type="entry name" value="AIPM/Hcit_synth_CS"/>
</dbReference>
<dbReference type="InterPro" id="IPR013785">
    <property type="entry name" value="Aldolase_TIM"/>
</dbReference>
<dbReference type="InterPro" id="IPR005668">
    <property type="entry name" value="IPM_Synthase"/>
</dbReference>
<dbReference type="InterPro" id="IPR054692">
    <property type="entry name" value="LeuA-like_post-cat"/>
</dbReference>
<dbReference type="InterPro" id="IPR036230">
    <property type="entry name" value="LeuA_allosteric_dom_sf"/>
</dbReference>
<dbReference type="InterPro" id="IPR039371">
    <property type="entry name" value="LeuA_N_DRE-TIM"/>
</dbReference>
<dbReference type="InterPro" id="IPR000891">
    <property type="entry name" value="PYR_CT"/>
</dbReference>
<dbReference type="NCBIfam" id="TIGR00970">
    <property type="entry name" value="leuA_yeast"/>
    <property type="match status" value="1"/>
</dbReference>
<dbReference type="NCBIfam" id="NF002991">
    <property type="entry name" value="PRK03739.1"/>
    <property type="match status" value="1"/>
</dbReference>
<dbReference type="PANTHER" id="PTHR46911">
    <property type="match status" value="1"/>
</dbReference>
<dbReference type="PANTHER" id="PTHR46911:SF1">
    <property type="entry name" value="2-ISOPROPYLMALATE SYNTHASE"/>
    <property type="match status" value="1"/>
</dbReference>
<dbReference type="Pfam" id="PF00682">
    <property type="entry name" value="HMGL-like"/>
    <property type="match status" value="1"/>
</dbReference>
<dbReference type="Pfam" id="PF22615">
    <property type="entry name" value="IPMS_D2"/>
    <property type="match status" value="1"/>
</dbReference>
<dbReference type="Pfam" id="PF08502">
    <property type="entry name" value="LeuA_dimer"/>
    <property type="match status" value="1"/>
</dbReference>
<dbReference type="SMART" id="SM00917">
    <property type="entry name" value="LeuA_dimer"/>
    <property type="match status" value="1"/>
</dbReference>
<dbReference type="SUPFAM" id="SSF110921">
    <property type="entry name" value="2-isopropylmalate synthase LeuA, allosteric (dimerisation) domain"/>
    <property type="match status" value="2"/>
</dbReference>
<dbReference type="SUPFAM" id="SSF51569">
    <property type="entry name" value="Aldolase"/>
    <property type="match status" value="1"/>
</dbReference>
<dbReference type="SUPFAM" id="SSF89000">
    <property type="entry name" value="post-HMGL domain-like"/>
    <property type="match status" value="1"/>
</dbReference>
<dbReference type="PROSITE" id="PS00815">
    <property type="entry name" value="AIPM_HOMOCIT_SYNTH_1"/>
    <property type="match status" value="1"/>
</dbReference>
<dbReference type="PROSITE" id="PS00816">
    <property type="entry name" value="AIPM_HOMOCIT_SYNTH_2"/>
    <property type="match status" value="1"/>
</dbReference>
<dbReference type="PROSITE" id="PS50991">
    <property type="entry name" value="PYR_CT"/>
    <property type="match status" value="1"/>
</dbReference>
<protein>
    <recommendedName>
        <fullName evidence="1">2-isopropylmalate synthase</fullName>
        <ecNumber evidence="1">2.3.3.13</ecNumber>
    </recommendedName>
    <alternativeName>
        <fullName evidence="1">Alpha-IPM synthase</fullName>
    </alternativeName>
    <alternativeName>
        <fullName evidence="1">Alpha-isopropylmalate synthase</fullName>
    </alternativeName>
</protein>
<accession>Q7TVV6</accession>
<accession>A0A1R3Y5D6</accession>
<accession>X2BP46</accession>
<gene>
    <name evidence="1" type="primary">leuA</name>
    <name type="ordered locus">BQ2027_MB3737</name>
</gene>